<protein>
    <recommendedName>
        <fullName evidence="1">D-aminoacyl-tRNA deacylase</fullName>
        <shortName evidence="1">DTD</shortName>
        <ecNumber evidence="1">3.1.1.96</ecNumber>
    </recommendedName>
    <alternativeName>
        <fullName evidence="1">Gly-tRNA(Ala) deacylase</fullName>
    </alternativeName>
</protein>
<sequence length="152" mass="16116">MLALVQRVCEARVVVEGEVVGRIGRGLLVFLCAERGDTEAEGERLLVKLLKLRIFADAQGRMNRSVQDVGGGLLIVSQFTLAADASGGNRPSFSGAAAPADGLRLYEVFVRGARALHPEVESGQFGADMQVHLVNDGPVTVPLRIVPTALPV</sequence>
<dbReference type="EC" id="3.1.1.96" evidence="1"/>
<dbReference type="EMBL" id="CR555306">
    <property type="protein sequence ID" value="CAI06158.1"/>
    <property type="molecule type" value="Genomic_DNA"/>
</dbReference>
<dbReference type="RefSeq" id="WP_011235901.1">
    <property type="nucleotide sequence ID" value="NC_006513.1"/>
</dbReference>
<dbReference type="SMR" id="Q5P951"/>
<dbReference type="STRING" id="76114.ebA64"/>
<dbReference type="KEGG" id="eba:ebA64"/>
<dbReference type="eggNOG" id="COG1490">
    <property type="taxonomic scope" value="Bacteria"/>
</dbReference>
<dbReference type="HOGENOM" id="CLU_076901_1_1_4"/>
<dbReference type="OrthoDB" id="9801395at2"/>
<dbReference type="Proteomes" id="UP000006552">
    <property type="component" value="Chromosome"/>
</dbReference>
<dbReference type="GO" id="GO:0005737">
    <property type="term" value="C:cytoplasm"/>
    <property type="evidence" value="ECO:0007669"/>
    <property type="project" value="UniProtKB-SubCell"/>
</dbReference>
<dbReference type="GO" id="GO:0051500">
    <property type="term" value="F:D-tyrosyl-tRNA(Tyr) deacylase activity"/>
    <property type="evidence" value="ECO:0007669"/>
    <property type="project" value="TreeGrafter"/>
</dbReference>
<dbReference type="GO" id="GO:0106026">
    <property type="term" value="F:Gly-tRNA(Ala) deacylase activity"/>
    <property type="evidence" value="ECO:0007669"/>
    <property type="project" value="UniProtKB-UniRule"/>
</dbReference>
<dbReference type="GO" id="GO:0043908">
    <property type="term" value="F:Ser(Gly)-tRNA(Ala) hydrolase activity"/>
    <property type="evidence" value="ECO:0007669"/>
    <property type="project" value="UniProtKB-UniRule"/>
</dbReference>
<dbReference type="GO" id="GO:0000049">
    <property type="term" value="F:tRNA binding"/>
    <property type="evidence" value="ECO:0007669"/>
    <property type="project" value="UniProtKB-UniRule"/>
</dbReference>
<dbReference type="GO" id="GO:0019478">
    <property type="term" value="P:D-amino acid catabolic process"/>
    <property type="evidence" value="ECO:0007669"/>
    <property type="project" value="UniProtKB-UniRule"/>
</dbReference>
<dbReference type="FunFam" id="3.50.80.10:FF:000001">
    <property type="entry name" value="D-aminoacyl-tRNA deacylase"/>
    <property type="match status" value="1"/>
</dbReference>
<dbReference type="Gene3D" id="3.50.80.10">
    <property type="entry name" value="D-tyrosyl-tRNA(Tyr) deacylase"/>
    <property type="match status" value="1"/>
</dbReference>
<dbReference type="HAMAP" id="MF_00518">
    <property type="entry name" value="Deacylase_Dtd"/>
    <property type="match status" value="1"/>
</dbReference>
<dbReference type="InterPro" id="IPR003732">
    <property type="entry name" value="Daa-tRNA_deacyls_DTD"/>
</dbReference>
<dbReference type="InterPro" id="IPR023509">
    <property type="entry name" value="DTD-like_sf"/>
</dbReference>
<dbReference type="NCBIfam" id="TIGR00256">
    <property type="entry name" value="D-aminoacyl-tRNA deacylase"/>
    <property type="match status" value="1"/>
</dbReference>
<dbReference type="PANTHER" id="PTHR10472:SF5">
    <property type="entry name" value="D-AMINOACYL-TRNA DEACYLASE 1"/>
    <property type="match status" value="1"/>
</dbReference>
<dbReference type="PANTHER" id="PTHR10472">
    <property type="entry name" value="D-TYROSYL-TRNA TYR DEACYLASE"/>
    <property type="match status" value="1"/>
</dbReference>
<dbReference type="Pfam" id="PF02580">
    <property type="entry name" value="Tyr_Deacylase"/>
    <property type="match status" value="1"/>
</dbReference>
<dbReference type="SUPFAM" id="SSF69500">
    <property type="entry name" value="DTD-like"/>
    <property type="match status" value="1"/>
</dbReference>
<name>DTD_AROAE</name>
<organism>
    <name type="scientific">Aromatoleum aromaticum (strain DSM 19018 / LMG 30748 / EbN1)</name>
    <name type="common">Azoarcus sp. (strain EbN1)</name>
    <dbReference type="NCBI Taxonomy" id="76114"/>
    <lineage>
        <taxon>Bacteria</taxon>
        <taxon>Pseudomonadati</taxon>
        <taxon>Pseudomonadota</taxon>
        <taxon>Betaproteobacteria</taxon>
        <taxon>Rhodocyclales</taxon>
        <taxon>Rhodocyclaceae</taxon>
        <taxon>Aromatoleum</taxon>
    </lineage>
</organism>
<gene>
    <name evidence="1" type="primary">dtd</name>
    <name type="ordered locus">AZOSEA00380</name>
    <name type="ORF">ebA64</name>
</gene>
<keyword id="KW-0963">Cytoplasm</keyword>
<keyword id="KW-0378">Hydrolase</keyword>
<keyword id="KW-1185">Reference proteome</keyword>
<keyword id="KW-0694">RNA-binding</keyword>
<keyword id="KW-0820">tRNA-binding</keyword>
<reference key="1">
    <citation type="journal article" date="2005" name="Arch. Microbiol.">
        <title>The genome sequence of an anaerobic aromatic-degrading denitrifying bacterium, strain EbN1.</title>
        <authorList>
            <person name="Rabus R."/>
            <person name="Kube M."/>
            <person name="Heider J."/>
            <person name="Beck A."/>
            <person name="Heitmann K."/>
            <person name="Widdel F."/>
            <person name="Reinhardt R."/>
        </authorList>
    </citation>
    <scope>NUCLEOTIDE SEQUENCE [LARGE SCALE GENOMIC DNA]</scope>
    <source>
        <strain>DSM 19018 / LMG 30748 / EbN1</strain>
    </source>
</reference>
<feature type="chain" id="PRO_0000164514" description="D-aminoacyl-tRNA deacylase">
    <location>
        <begin position="1"/>
        <end position="152"/>
    </location>
</feature>
<feature type="short sequence motif" description="Gly-cisPro motif, important for rejection of L-amino acids" evidence="1">
    <location>
        <begin position="137"/>
        <end position="138"/>
    </location>
</feature>
<proteinExistence type="inferred from homology"/>
<evidence type="ECO:0000255" key="1">
    <source>
        <dbReference type="HAMAP-Rule" id="MF_00518"/>
    </source>
</evidence>
<accession>Q5P951</accession>
<comment type="function">
    <text evidence="1">An aminoacyl-tRNA editing enzyme that deacylates mischarged D-aminoacyl-tRNAs. Also deacylates mischarged glycyl-tRNA(Ala), protecting cells against glycine mischarging by AlaRS. Acts via tRNA-based rather than protein-based catalysis; rejects L-amino acids rather than detecting D-amino acids in the active site. By recycling D-aminoacyl-tRNA to D-amino acids and free tRNA molecules, this enzyme counteracts the toxicity associated with the formation of D-aminoacyl-tRNA entities in vivo and helps enforce protein L-homochirality.</text>
</comment>
<comment type="catalytic activity">
    <reaction evidence="1">
        <text>glycyl-tRNA(Ala) + H2O = tRNA(Ala) + glycine + H(+)</text>
        <dbReference type="Rhea" id="RHEA:53744"/>
        <dbReference type="Rhea" id="RHEA-COMP:9657"/>
        <dbReference type="Rhea" id="RHEA-COMP:13640"/>
        <dbReference type="ChEBI" id="CHEBI:15377"/>
        <dbReference type="ChEBI" id="CHEBI:15378"/>
        <dbReference type="ChEBI" id="CHEBI:57305"/>
        <dbReference type="ChEBI" id="CHEBI:78442"/>
        <dbReference type="ChEBI" id="CHEBI:78522"/>
        <dbReference type="EC" id="3.1.1.96"/>
    </reaction>
</comment>
<comment type="catalytic activity">
    <reaction evidence="1">
        <text>a D-aminoacyl-tRNA + H2O = a tRNA + a D-alpha-amino acid + H(+)</text>
        <dbReference type="Rhea" id="RHEA:13953"/>
        <dbReference type="Rhea" id="RHEA-COMP:10123"/>
        <dbReference type="Rhea" id="RHEA-COMP:10124"/>
        <dbReference type="ChEBI" id="CHEBI:15377"/>
        <dbReference type="ChEBI" id="CHEBI:15378"/>
        <dbReference type="ChEBI" id="CHEBI:59871"/>
        <dbReference type="ChEBI" id="CHEBI:78442"/>
        <dbReference type="ChEBI" id="CHEBI:79333"/>
        <dbReference type="EC" id="3.1.1.96"/>
    </reaction>
</comment>
<comment type="subunit">
    <text evidence="1">Homodimer.</text>
</comment>
<comment type="subcellular location">
    <subcellularLocation>
        <location evidence="1">Cytoplasm</location>
    </subcellularLocation>
</comment>
<comment type="domain">
    <text evidence="1">A Gly-cisPro motif from one monomer fits into the active site of the other monomer to allow specific chiral rejection of L-amino acids.</text>
</comment>
<comment type="similarity">
    <text evidence="1">Belongs to the DTD family.</text>
</comment>